<evidence type="ECO:0000255" key="1">
    <source>
        <dbReference type="HAMAP-Rule" id="MF_01227"/>
    </source>
</evidence>
<protein>
    <recommendedName>
        <fullName evidence="1">CTP synthase</fullName>
        <ecNumber evidence="1">6.3.4.2</ecNumber>
    </recommendedName>
    <alternativeName>
        <fullName evidence="1">Cytidine 5'-triphosphate synthase</fullName>
    </alternativeName>
    <alternativeName>
        <fullName evidence="1">Cytidine triphosphate synthetase</fullName>
        <shortName evidence="1">CTP synthetase</shortName>
        <shortName evidence="1">CTPS</shortName>
    </alternativeName>
    <alternativeName>
        <fullName evidence="1">UTP--ammonia ligase</fullName>
    </alternativeName>
</protein>
<keyword id="KW-0067">ATP-binding</keyword>
<keyword id="KW-0315">Glutamine amidotransferase</keyword>
<keyword id="KW-0436">Ligase</keyword>
<keyword id="KW-0460">Magnesium</keyword>
<keyword id="KW-0479">Metal-binding</keyword>
<keyword id="KW-0547">Nucleotide-binding</keyword>
<keyword id="KW-0665">Pyrimidine biosynthesis</keyword>
<keyword id="KW-1185">Reference proteome</keyword>
<feature type="chain" id="PRO_0000266087" description="CTP synthase">
    <location>
        <begin position="1"/>
        <end position="557"/>
    </location>
</feature>
<feature type="domain" description="Glutamine amidotransferase type-1" evidence="1">
    <location>
        <begin position="295"/>
        <end position="547"/>
    </location>
</feature>
<feature type="region of interest" description="Amidoligase domain" evidence="1">
    <location>
        <begin position="1"/>
        <end position="270"/>
    </location>
</feature>
<feature type="active site" description="Nucleophile; for glutamine hydrolysis" evidence="1">
    <location>
        <position position="383"/>
    </location>
</feature>
<feature type="active site" evidence="1">
    <location>
        <position position="520"/>
    </location>
</feature>
<feature type="active site" evidence="1">
    <location>
        <position position="522"/>
    </location>
</feature>
<feature type="binding site" evidence="1">
    <location>
        <position position="13"/>
    </location>
    <ligand>
        <name>CTP</name>
        <dbReference type="ChEBI" id="CHEBI:37563"/>
        <note>allosteric inhibitor</note>
    </ligand>
</feature>
<feature type="binding site" evidence="1">
    <location>
        <position position="13"/>
    </location>
    <ligand>
        <name>UTP</name>
        <dbReference type="ChEBI" id="CHEBI:46398"/>
    </ligand>
</feature>
<feature type="binding site" evidence="1">
    <location>
        <begin position="14"/>
        <end position="19"/>
    </location>
    <ligand>
        <name>ATP</name>
        <dbReference type="ChEBI" id="CHEBI:30616"/>
    </ligand>
</feature>
<feature type="binding site" evidence="1">
    <location>
        <position position="71"/>
    </location>
    <ligand>
        <name>ATP</name>
        <dbReference type="ChEBI" id="CHEBI:30616"/>
    </ligand>
</feature>
<feature type="binding site" evidence="1">
    <location>
        <position position="71"/>
    </location>
    <ligand>
        <name>Mg(2+)</name>
        <dbReference type="ChEBI" id="CHEBI:18420"/>
    </ligand>
</feature>
<feature type="binding site" evidence="1">
    <location>
        <position position="144"/>
    </location>
    <ligand>
        <name>Mg(2+)</name>
        <dbReference type="ChEBI" id="CHEBI:18420"/>
    </ligand>
</feature>
<feature type="binding site" evidence="1">
    <location>
        <begin position="151"/>
        <end position="153"/>
    </location>
    <ligand>
        <name>CTP</name>
        <dbReference type="ChEBI" id="CHEBI:37563"/>
        <note>allosteric inhibitor</note>
    </ligand>
</feature>
<feature type="binding site" evidence="1">
    <location>
        <begin position="191"/>
        <end position="196"/>
    </location>
    <ligand>
        <name>CTP</name>
        <dbReference type="ChEBI" id="CHEBI:37563"/>
        <note>allosteric inhibitor</note>
    </ligand>
</feature>
<feature type="binding site" evidence="1">
    <location>
        <begin position="191"/>
        <end position="196"/>
    </location>
    <ligand>
        <name>UTP</name>
        <dbReference type="ChEBI" id="CHEBI:46398"/>
    </ligand>
</feature>
<feature type="binding site" evidence="1">
    <location>
        <position position="227"/>
    </location>
    <ligand>
        <name>CTP</name>
        <dbReference type="ChEBI" id="CHEBI:37563"/>
        <note>allosteric inhibitor</note>
    </ligand>
</feature>
<feature type="binding site" evidence="1">
    <location>
        <position position="227"/>
    </location>
    <ligand>
        <name>UTP</name>
        <dbReference type="ChEBI" id="CHEBI:46398"/>
    </ligand>
</feature>
<feature type="binding site" evidence="1">
    <location>
        <position position="356"/>
    </location>
    <ligand>
        <name>L-glutamine</name>
        <dbReference type="ChEBI" id="CHEBI:58359"/>
    </ligand>
</feature>
<feature type="binding site" evidence="1">
    <location>
        <begin position="384"/>
        <end position="387"/>
    </location>
    <ligand>
        <name>L-glutamine</name>
        <dbReference type="ChEBI" id="CHEBI:58359"/>
    </ligand>
</feature>
<feature type="binding site" evidence="1">
    <location>
        <position position="407"/>
    </location>
    <ligand>
        <name>L-glutamine</name>
        <dbReference type="ChEBI" id="CHEBI:58359"/>
    </ligand>
</feature>
<feature type="binding site" evidence="1">
    <location>
        <position position="473"/>
    </location>
    <ligand>
        <name>L-glutamine</name>
        <dbReference type="ChEBI" id="CHEBI:58359"/>
    </ligand>
</feature>
<dbReference type="EC" id="6.3.4.2" evidence="1"/>
<dbReference type="EMBL" id="CP000270">
    <property type="protein sequence ID" value="ABE31384.1"/>
    <property type="molecule type" value="Genomic_DNA"/>
</dbReference>
<dbReference type="RefSeq" id="WP_011488963.1">
    <property type="nucleotide sequence ID" value="NC_007951.1"/>
</dbReference>
<dbReference type="SMR" id="Q13X05"/>
<dbReference type="STRING" id="266265.Bxe_A1571"/>
<dbReference type="MEROPS" id="C26.964"/>
<dbReference type="KEGG" id="bxb:DR64_3732"/>
<dbReference type="KEGG" id="bxe:Bxe_A1571"/>
<dbReference type="PATRIC" id="fig|266265.5.peg.2986"/>
<dbReference type="eggNOG" id="COG0504">
    <property type="taxonomic scope" value="Bacteria"/>
</dbReference>
<dbReference type="OrthoDB" id="9801107at2"/>
<dbReference type="UniPathway" id="UPA00159">
    <property type="reaction ID" value="UER00277"/>
</dbReference>
<dbReference type="Proteomes" id="UP000001817">
    <property type="component" value="Chromosome 1"/>
</dbReference>
<dbReference type="GO" id="GO:0005829">
    <property type="term" value="C:cytosol"/>
    <property type="evidence" value="ECO:0007669"/>
    <property type="project" value="TreeGrafter"/>
</dbReference>
<dbReference type="GO" id="GO:0005524">
    <property type="term" value="F:ATP binding"/>
    <property type="evidence" value="ECO:0007669"/>
    <property type="project" value="UniProtKB-KW"/>
</dbReference>
<dbReference type="GO" id="GO:0003883">
    <property type="term" value="F:CTP synthase activity"/>
    <property type="evidence" value="ECO:0007669"/>
    <property type="project" value="UniProtKB-UniRule"/>
</dbReference>
<dbReference type="GO" id="GO:0004359">
    <property type="term" value="F:glutaminase activity"/>
    <property type="evidence" value="ECO:0007669"/>
    <property type="project" value="RHEA"/>
</dbReference>
<dbReference type="GO" id="GO:0042802">
    <property type="term" value="F:identical protein binding"/>
    <property type="evidence" value="ECO:0007669"/>
    <property type="project" value="TreeGrafter"/>
</dbReference>
<dbReference type="GO" id="GO:0046872">
    <property type="term" value="F:metal ion binding"/>
    <property type="evidence" value="ECO:0007669"/>
    <property type="project" value="UniProtKB-KW"/>
</dbReference>
<dbReference type="GO" id="GO:0044210">
    <property type="term" value="P:'de novo' CTP biosynthetic process"/>
    <property type="evidence" value="ECO:0007669"/>
    <property type="project" value="UniProtKB-UniRule"/>
</dbReference>
<dbReference type="GO" id="GO:0019856">
    <property type="term" value="P:pyrimidine nucleobase biosynthetic process"/>
    <property type="evidence" value="ECO:0007669"/>
    <property type="project" value="TreeGrafter"/>
</dbReference>
<dbReference type="CDD" id="cd03113">
    <property type="entry name" value="CTPS_N"/>
    <property type="match status" value="1"/>
</dbReference>
<dbReference type="CDD" id="cd01746">
    <property type="entry name" value="GATase1_CTP_Synthase"/>
    <property type="match status" value="1"/>
</dbReference>
<dbReference type="FunFam" id="3.40.50.300:FF:000009">
    <property type="entry name" value="CTP synthase"/>
    <property type="match status" value="1"/>
</dbReference>
<dbReference type="FunFam" id="3.40.50.880:FF:000002">
    <property type="entry name" value="CTP synthase"/>
    <property type="match status" value="1"/>
</dbReference>
<dbReference type="Gene3D" id="3.40.50.880">
    <property type="match status" value="1"/>
</dbReference>
<dbReference type="Gene3D" id="3.40.50.300">
    <property type="entry name" value="P-loop containing nucleotide triphosphate hydrolases"/>
    <property type="match status" value="1"/>
</dbReference>
<dbReference type="HAMAP" id="MF_01227">
    <property type="entry name" value="PyrG"/>
    <property type="match status" value="1"/>
</dbReference>
<dbReference type="InterPro" id="IPR029062">
    <property type="entry name" value="Class_I_gatase-like"/>
</dbReference>
<dbReference type="InterPro" id="IPR004468">
    <property type="entry name" value="CTP_synthase"/>
</dbReference>
<dbReference type="InterPro" id="IPR017456">
    <property type="entry name" value="CTP_synthase_N"/>
</dbReference>
<dbReference type="InterPro" id="IPR017926">
    <property type="entry name" value="GATASE"/>
</dbReference>
<dbReference type="InterPro" id="IPR033828">
    <property type="entry name" value="GATase1_CTP_Synthase"/>
</dbReference>
<dbReference type="InterPro" id="IPR027417">
    <property type="entry name" value="P-loop_NTPase"/>
</dbReference>
<dbReference type="NCBIfam" id="NF003792">
    <property type="entry name" value="PRK05380.1"/>
    <property type="match status" value="1"/>
</dbReference>
<dbReference type="NCBIfam" id="TIGR00337">
    <property type="entry name" value="PyrG"/>
    <property type="match status" value="1"/>
</dbReference>
<dbReference type="PANTHER" id="PTHR11550">
    <property type="entry name" value="CTP SYNTHASE"/>
    <property type="match status" value="1"/>
</dbReference>
<dbReference type="PANTHER" id="PTHR11550:SF0">
    <property type="entry name" value="CTP SYNTHASE-RELATED"/>
    <property type="match status" value="1"/>
</dbReference>
<dbReference type="Pfam" id="PF06418">
    <property type="entry name" value="CTP_synth_N"/>
    <property type="match status" value="1"/>
</dbReference>
<dbReference type="Pfam" id="PF00117">
    <property type="entry name" value="GATase"/>
    <property type="match status" value="1"/>
</dbReference>
<dbReference type="SUPFAM" id="SSF52317">
    <property type="entry name" value="Class I glutamine amidotransferase-like"/>
    <property type="match status" value="1"/>
</dbReference>
<dbReference type="SUPFAM" id="SSF52540">
    <property type="entry name" value="P-loop containing nucleoside triphosphate hydrolases"/>
    <property type="match status" value="1"/>
</dbReference>
<dbReference type="PROSITE" id="PS51273">
    <property type="entry name" value="GATASE_TYPE_1"/>
    <property type="match status" value="1"/>
</dbReference>
<comment type="function">
    <text evidence="1">Catalyzes the ATP-dependent amination of UTP to CTP with either L-glutamine or ammonia as the source of nitrogen. Regulates intracellular CTP levels through interactions with the four ribonucleotide triphosphates.</text>
</comment>
<comment type="catalytic activity">
    <reaction evidence="1">
        <text>UTP + L-glutamine + ATP + H2O = CTP + L-glutamate + ADP + phosphate + 2 H(+)</text>
        <dbReference type="Rhea" id="RHEA:26426"/>
        <dbReference type="ChEBI" id="CHEBI:15377"/>
        <dbReference type="ChEBI" id="CHEBI:15378"/>
        <dbReference type="ChEBI" id="CHEBI:29985"/>
        <dbReference type="ChEBI" id="CHEBI:30616"/>
        <dbReference type="ChEBI" id="CHEBI:37563"/>
        <dbReference type="ChEBI" id="CHEBI:43474"/>
        <dbReference type="ChEBI" id="CHEBI:46398"/>
        <dbReference type="ChEBI" id="CHEBI:58359"/>
        <dbReference type="ChEBI" id="CHEBI:456216"/>
        <dbReference type="EC" id="6.3.4.2"/>
    </reaction>
</comment>
<comment type="catalytic activity">
    <reaction evidence="1">
        <text>L-glutamine + H2O = L-glutamate + NH4(+)</text>
        <dbReference type="Rhea" id="RHEA:15889"/>
        <dbReference type="ChEBI" id="CHEBI:15377"/>
        <dbReference type="ChEBI" id="CHEBI:28938"/>
        <dbReference type="ChEBI" id="CHEBI:29985"/>
        <dbReference type="ChEBI" id="CHEBI:58359"/>
    </reaction>
</comment>
<comment type="catalytic activity">
    <reaction evidence="1">
        <text>UTP + NH4(+) + ATP = CTP + ADP + phosphate + 2 H(+)</text>
        <dbReference type="Rhea" id="RHEA:16597"/>
        <dbReference type="ChEBI" id="CHEBI:15378"/>
        <dbReference type="ChEBI" id="CHEBI:28938"/>
        <dbReference type="ChEBI" id="CHEBI:30616"/>
        <dbReference type="ChEBI" id="CHEBI:37563"/>
        <dbReference type="ChEBI" id="CHEBI:43474"/>
        <dbReference type="ChEBI" id="CHEBI:46398"/>
        <dbReference type="ChEBI" id="CHEBI:456216"/>
    </reaction>
</comment>
<comment type="activity regulation">
    <text evidence="1">Allosterically activated by GTP, when glutamine is the substrate; GTP has no effect on the reaction when ammonia is the substrate. The allosteric effector GTP functions by stabilizing the protein conformation that binds the tetrahedral intermediate(s) formed during glutamine hydrolysis. Inhibited by the product CTP, via allosteric rather than competitive inhibition.</text>
</comment>
<comment type="pathway">
    <text evidence="1">Pyrimidine metabolism; CTP biosynthesis via de novo pathway; CTP from UDP: step 2/2.</text>
</comment>
<comment type="subunit">
    <text evidence="1">Homotetramer.</text>
</comment>
<comment type="miscellaneous">
    <text evidence="1">CTPSs have evolved a hybrid strategy for distinguishing between UTP and CTP. The overlapping regions of the product feedback inhibitory and substrate sites recognize a common feature in both compounds, the triphosphate moiety. To differentiate isosteric substrate and product pyrimidine rings, an additional pocket far from the expected kinase/ligase catalytic site, specifically recognizes the cytosine and ribose portions of the product inhibitor.</text>
</comment>
<comment type="similarity">
    <text evidence="1">Belongs to the CTP synthase family.</text>
</comment>
<proteinExistence type="inferred from homology"/>
<gene>
    <name evidence="1" type="primary">pyrG</name>
    <name type="ordered locus">Bxeno_A2846</name>
    <name type="ORF">Bxe_A1571</name>
</gene>
<name>PYRG_PARXL</name>
<organism>
    <name type="scientific">Paraburkholderia xenovorans (strain LB400)</name>
    <dbReference type="NCBI Taxonomy" id="266265"/>
    <lineage>
        <taxon>Bacteria</taxon>
        <taxon>Pseudomonadati</taxon>
        <taxon>Pseudomonadota</taxon>
        <taxon>Betaproteobacteria</taxon>
        <taxon>Burkholderiales</taxon>
        <taxon>Burkholderiaceae</taxon>
        <taxon>Paraburkholderia</taxon>
    </lineage>
</organism>
<reference key="1">
    <citation type="journal article" date="2006" name="Proc. Natl. Acad. Sci. U.S.A.">
        <title>Burkholderia xenovorans LB400 harbors a multi-replicon, 9.73-Mbp genome shaped for versatility.</title>
        <authorList>
            <person name="Chain P.S.G."/>
            <person name="Denef V.J."/>
            <person name="Konstantinidis K.T."/>
            <person name="Vergez L.M."/>
            <person name="Agullo L."/>
            <person name="Reyes V.L."/>
            <person name="Hauser L."/>
            <person name="Cordova M."/>
            <person name="Gomez L."/>
            <person name="Gonzalez M."/>
            <person name="Land M."/>
            <person name="Lao V."/>
            <person name="Larimer F."/>
            <person name="LiPuma J.J."/>
            <person name="Mahenthiralingam E."/>
            <person name="Malfatti S.A."/>
            <person name="Marx C.J."/>
            <person name="Parnell J.J."/>
            <person name="Ramette A."/>
            <person name="Richardson P."/>
            <person name="Seeger M."/>
            <person name="Smith D."/>
            <person name="Spilker T."/>
            <person name="Sul W.J."/>
            <person name="Tsoi T.V."/>
            <person name="Ulrich L.E."/>
            <person name="Zhulin I.B."/>
            <person name="Tiedje J.M."/>
        </authorList>
    </citation>
    <scope>NUCLEOTIDE SEQUENCE [LARGE SCALE GENOMIC DNA]</scope>
    <source>
        <strain>LB400</strain>
    </source>
</reference>
<accession>Q13X05</accession>
<sequence length="557" mass="61903">MTKYVFVTGGVVSSLGKGIAAASLAAILESRGLKVTLLKLDPYINVDPGTMSPFQHGEVFVTEDGAETDLDLGHYERFISTKMRKANNFTTGQIYESVIRKERRGDYLGKTVQVIPHITNEIQAFIERGAASATCGEPDVAIVEVGGTVGDIESLPFLEAARQMSLRMGRNSACFVHLTLVPWVATAGELKTKPTQHSVQKLREIGISPHVLLCRADRRIPDDERAKISMFSNVPEDAVISVWDADSIYKIPQMLHDQGLDAIICEELKLEPKAADLSMWSDLVEKLEHPRHEVTIGMVGKYVDLTESYKSLIEALRHASMHTSTKVNIEYIDSEEIETHGVESLKHLDAVLVPGGFGRRGTEGKIAAIRYAREAKVPYLGICLGMQLAVIEFARDVVGLKDANSTEFDQETPNRVVALITEWYDREGRVEKRTEESDLGGTMRLGSQRCPIKPGTMAEEIYGKDVNERHRHRYEVNNRFVPQLEAGGLIISARTPSEDLPEMMELPRSMHPWFVGVQFHPEFTSTPRDGHPLFKSFVEAALAHQQSRTAAEVGEKA</sequence>